<proteinExistence type="inferred from homology"/>
<name>HCAF_ECO57</name>
<evidence type="ECO:0000255" key="1">
    <source>
        <dbReference type="HAMAP-Rule" id="MF_01649"/>
    </source>
</evidence>
<organism>
    <name type="scientific">Escherichia coli O157:H7</name>
    <dbReference type="NCBI Taxonomy" id="83334"/>
    <lineage>
        <taxon>Bacteria</taxon>
        <taxon>Pseudomonadati</taxon>
        <taxon>Pseudomonadota</taxon>
        <taxon>Gammaproteobacteria</taxon>
        <taxon>Enterobacterales</taxon>
        <taxon>Enterobacteriaceae</taxon>
        <taxon>Escherichia</taxon>
    </lineage>
</organism>
<reference key="1">
    <citation type="journal article" date="2001" name="Nature">
        <title>Genome sequence of enterohaemorrhagic Escherichia coli O157:H7.</title>
        <authorList>
            <person name="Perna N.T."/>
            <person name="Plunkett G. III"/>
            <person name="Burland V."/>
            <person name="Mau B."/>
            <person name="Glasner J.D."/>
            <person name="Rose D.J."/>
            <person name="Mayhew G.F."/>
            <person name="Evans P.S."/>
            <person name="Gregor J."/>
            <person name="Kirkpatrick H.A."/>
            <person name="Posfai G."/>
            <person name="Hackett J."/>
            <person name="Klink S."/>
            <person name="Boutin A."/>
            <person name="Shao Y."/>
            <person name="Miller L."/>
            <person name="Grotbeck E.J."/>
            <person name="Davis N.W."/>
            <person name="Lim A."/>
            <person name="Dimalanta E.T."/>
            <person name="Potamousis K."/>
            <person name="Apodaca J."/>
            <person name="Anantharaman T.S."/>
            <person name="Lin J."/>
            <person name="Yen G."/>
            <person name="Schwartz D.C."/>
            <person name="Welch R.A."/>
            <person name="Blattner F.R."/>
        </authorList>
    </citation>
    <scope>NUCLEOTIDE SEQUENCE [LARGE SCALE GENOMIC DNA]</scope>
    <source>
        <strain>O157:H7 / EDL933 / ATCC 700927 / EHEC</strain>
    </source>
</reference>
<reference key="2">
    <citation type="journal article" date="2001" name="DNA Res.">
        <title>Complete genome sequence of enterohemorrhagic Escherichia coli O157:H7 and genomic comparison with a laboratory strain K-12.</title>
        <authorList>
            <person name="Hayashi T."/>
            <person name="Makino K."/>
            <person name="Ohnishi M."/>
            <person name="Kurokawa K."/>
            <person name="Ishii K."/>
            <person name="Yokoyama K."/>
            <person name="Han C.-G."/>
            <person name="Ohtsubo E."/>
            <person name="Nakayama K."/>
            <person name="Murata T."/>
            <person name="Tanaka M."/>
            <person name="Tobe T."/>
            <person name="Iida T."/>
            <person name="Takami H."/>
            <person name="Honda T."/>
            <person name="Sasakawa C."/>
            <person name="Ogasawara N."/>
            <person name="Yasunaga T."/>
            <person name="Kuhara S."/>
            <person name="Shiba T."/>
            <person name="Hattori M."/>
            <person name="Shinagawa H."/>
        </authorList>
    </citation>
    <scope>NUCLEOTIDE SEQUENCE [LARGE SCALE GENOMIC DNA]</scope>
    <source>
        <strain>O157:H7 / Sakai / RIMD 0509952 / EHEC</strain>
    </source>
</reference>
<gene>
    <name evidence="1" type="primary">hcaF</name>
    <name type="ordered locus">Z3810</name>
    <name type="ordered locus">ECs3405</name>
</gene>
<keyword id="KW-0058">Aromatic hydrocarbons catabolism</keyword>
<keyword id="KW-0223">Dioxygenase</keyword>
<keyword id="KW-0520">NAD</keyword>
<keyword id="KW-0560">Oxidoreductase</keyword>
<keyword id="KW-1185">Reference proteome</keyword>
<sequence>MSAQVSLELHHRISQFLFHEASLLDDWKFRDWLAQLDEEICYTMRTTVNAQTRDRRKGVQPPTTWIFNDTKDQLERRIARLETGMAWAEEPPSRTRHLISNCQISETDIPNVFAVRVNYLLYRAQKERDETFYVGTRFDKVRRLEDDNWRLLERDIVLDQAVITSHNLSVLF</sequence>
<feature type="chain" id="PRO_0000333711" description="3-phenylpropionate/cinnamic acid dioxygenase subunit beta">
    <location>
        <begin position="1"/>
        <end position="172"/>
    </location>
</feature>
<dbReference type="EC" id="1.14.12.19" evidence="1"/>
<dbReference type="EMBL" id="AE005174">
    <property type="protein sequence ID" value="AAG57652.1"/>
    <property type="molecule type" value="Genomic_DNA"/>
</dbReference>
<dbReference type="EMBL" id="BA000007">
    <property type="protein sequence ID" value="BAB36828.1"/>
    <property type="molecule type" value="Genomic_DNA"/>
</dbReference>
<dbReference type="PIR" id="E91054">
    <property type="entry name" value="E91054"/>
</dbReference>
<dbReference type="PIR" id="H85898">
    <property type="entry name" value="H85898"/>
</dbReference>
<dbReference type="RefSeq" id="NP_311432.1">
    <property type="nucleotide sequence ID" value="NC_002695.1"/>
</dbReference>
<dbReference type="RefSeq" id="WP_001276062.1">
    <property type="nucleotide sequence ID" value="NZ_VOAI01000001.1"/>
</dbReference>
<dbReference type="SMR" id="Q8XA73"/>
<dbReference type="STRING" id="155864.Z3810"/>
<dbReference type="GeneID" id="914927"/>
<dbReference type="KEGG" id="ece:Z3810"/>
<dbReference type="KEGG" id="ecs:ECs_3405"/>
<dbReference type="PATRIC" id="fig|386585.9.peg.3557"/>
<dbReference type="eggNOG" id="COG5517">
    <property type="taxonomic scope" value="Bacteria"/>
</dbReference>
<dbReference type="HOGENOM" id="CLU_102527_1_1_6"/>
<dbReference type="OMA" id="HLQAHQF"/>
<dbReference type="UniPathway" id="UPA00714"/>
<dbReference type="Proteomes" id="UP000000558">
    <property type="component" value="Chromosome"/>
</dbReference>
<dbReference type="Proteomes" id="UP000002519">
    <property type="component" value="Chromosome"/>
</dbReference>
<dbReference type="GO" id="GO:0008695">
    <property type="term" value="F:3-phenylpropionate dioxygenase activity"/>
    <property type="evidence" value="ECO:0007669"/>
    <property type="project" value="UniProtKB-UniRule"/>
</dbReference>
<dbReference type="GO" id="GO:0019380">
    <property type="term" value="P:3-phenylpropionate catabolic process"/>
    <property type="evidence" value="ECO:0007669"/>
    <property type="project" value="UniProtKB-UniRule"/>
</dbReference>
<dbReference type="CDD" id="cd00667">
    <property type="entry name" value="ring_hydroxylating_dioxygenases_beta"/>
    <property type="match status" value="1"/>
</dbReference>
<dbReference type="FunFam" id="3.10.450.50:FF:000008">
    <property type="entry name" value="3-phenylpropionate/cinnamic acid dioxygenase subunit beta"/>
    <property type="match status" value="1"/>
</dbReference>
<dbReference type="Gene3D" id="3.10.450.50">
    <property type="match status" value="1"/>
</dbReference>
<dbReference type="HAMAP" id="MF_01649">
    <property type="entry name" value="HcaF"/>
    <property type="match status" value="1"/>
</dbReference>
<dbReference type="InterPro" id="IPR054881">
    <property type="entry name" value="3PPDioc_HcaF"/>
</dbReference>
<dbReference type="InterPro" id="IPR023712">
    <property type="entry name" value="HcaF"/>
</dbReference>
<dbReference type="InterPro" id="IPR032710">
    <property type="entry name" value="NTF2-like_dom_sf"/>
</dbReference>
<dbReference type="InterPro" id="IPR000391">
    <property type="entry name" value="Rng_hydr_dOase-bsu"/>
</dbReference>
<dbReference type="NCBIfam" id="NF042947">
    <property type="entry name" value="3PPDioc_HcaF"/>
    <property type="match status" value="1"/>
</dbReference>
<dbReference type="NCBIfam" id="NF007479">
    <property type="entry name" value="PRK10069.1"/>
    <property type="match status" value="1"/>
</dbReference>
<dbReference type="PANTHER" id="PTHR41534:SF2">
    <property type="entry name" value="3-PHENYLPROPIONATE_CINNAMIC ACID DIOXYGENASE SUBUNIT BETA"/>
    <property type="match status" value="1"/>
</dbReference>
<dbReference type="PANTHER" id="PTHR41534">
    <property type="entry name" value="BLR3401 PROTEIN"/>
    <property type="match status" value="1"/>
</dbReference>
<dbReference type="Pfam" id="PF00866">
    <property type="entry name" value="Ring_hydroxyl_B"/>
    <property type="match status" value="1"/>
</dbReference>
<dbReference type="SUPFAM" id="SSF54427">
    <property type="entry name" value="NTF2-like"/>
    <property type="match status" value="1"/>
</dbReference>
<protein>
    <recommendedName>
        <fullName evidence="1">3-phenylpropionate/cinnamic acid dioxygenase subunit beta</fullName>
        <ecNumber evidence="1">1.14.12.19</ecNumber>
    </recommendedName>
</protein>
<accession>Q8XA73</accession>
<accession>Q7ABL7</accession>
<comment type="function">
    <text evidence="1">Part of the multicomponent 3-phenylpropionate dioxygenase. Converts 3-phenylpropionic acid (PP) and cinnamic acid (CI) into 3-phenylpropionate-dihydrodiol (PP-dihydrodiol) and cinnamic acid-dihydrodiol (CI-dihydrodiol), respectively.</text>
</comment>
<comment type="catalytic activity">
    <reaction evidence="1">
        <text>3-phenylpropanoate + NADH + O2 + H(+) = 3-(cis-5,6-dihydroxycyclohexa-1,3-dien-1-yl)propanoate + NAD(+)</text>
        <dbReference type="Rhea" id="RHEA:20357"/>
        <dbReference type="ChEBI" id="CHEBI:15378"/>
        <dbReference type="ChEBI" id="CHEBI:15379"/>
        <dbReference type="ChEBI" id="CHEBI:51057"/>
        <dbReference type="ChEBI" id="CHEBI:57540"/>
        <dbReference type="ChEBI" id="CHEBI:57945"/>
        <dbReference type="ChEBI" id="CHEBI:60087"/>
        <dbReference type="EC" id="1.14.12.19"/>
    </reaction>
</comment>
<comment type="catalytic activity">
    <reaction evidence="1">
        <text>(E)-cinnamate + NADH + O2 + H(+) = (2E)-3-(cis-5,6-dihydroxycyclohexa-1,3-dien-1-yl)prop-2-enoate + NAD(+)</text>
        <dbReference type="Rhea" id="RHEA:25058"/>
        <dbReference type="ChEBI" id="CHEBI:15378"/>
        <dbReference type="ChEBI" id="CHEBI:15379"/>
        <dbReference type="ChEBI" id="CHEBI:15669"/>
        <dbReference type="ChEBI" id="CHEBI:57540"/>
        <dbReference type="ChEBI" id="CHEBI:57945"/>
        <dbReference type="ChEBI" id="CHEBI:61451"/>
        <dbReference type="EC" id="1.14.12.19"/>
    </reaction>
</comment>
<comment type="pathway">
    <text evidence="1">Aromatic compound metabolism; 3-phenylpropanoate degradation.</text>
</comment>
<comment type="subunit">
    <text evidence="1">This dioxygenase system consists of four proteins: the two subunits of the hydroxylase component (HcaE and HcaF), a ferredoxin (HcaC) and a ferredoxin reductase (HcaD).</text>
</comment>
<comment type="similarity">
    <text evidence="1">Belongs to the bacterial ring-hydroxylating dioxygenase beta subunit family.</text>
</comment>